<feature type="chain" id="PRO_0000201374" description="UTP--glucose-1-phosphate uridylyltransferase 2">
    <location>
        <begin position="1"/>
        <end position="304"/>
    </location>
</feature>
<name>HASC2_STRP6</name>
<organism>
    <name type="scientific">Streptococcus pyogenes serotype M6 (strain ATCC BAA-946 / MGAS10394)</name>
    <dbReference type="NCBI Taxonomy" id="286636"/>
    <lineage>
        <taxon>Bacteria</taxon>
        <taxon>Bacillati</taxon>
        <taxon>Bacillota</taxon>
        <taxon>Bacilli</taxon>
        <taxon>Lactobacillales</taxon>
        <taxon>Streptococcaceae</taxon>
        <taxon>Streptococcus</taxon>
    </lineage>
</organism>
<keyword id="KW-0548">Nucleotidyltransferase</keyword>
<keyword id="KW-0808">Transferase</keyword>
<protein>
    <recommendedName>
        <fullName>UTP--glucose-1-phosphate uridylyltransferase 2</fullName>
        <ecNumber>2.7.7.9</ecNumber>
    </recommendedName>
    <alternativeName>
        <fullName>Alpha-D-glucosyl-1-phosphate uridylyltransferase 2</fullName>
    </alternativeName>
    <alternativeName>
        <fullName>UDP-glucose pyrophosphorylase 2</fullName>
        <shortName>UDPGP 2</shortName>
    </alternativeName>
    <alternativeName>
        <fullName>Uridine diphosphoglucose pyrophosphorylase 2</fullName>
    </alternativeName>
</protein>
<accession>Q5X9A7</accession>
<evidence type="ECO:0000305" key="1"/>
<reference key="1">
    <citation type="journal article" date="2004" name="J. Infect. Dis.">
        <title>Progress toward characterization of the group A Streptococcus metagenome: complete genome sequence of a macrolide-resistant serotype M6 strain.</title>
        <authorList>
            <person name="Banks D.J."/>
            <person name="Porcella S.F."/>
            <person name="Barbian K.D."/>
            <person name="Beres S.B."/>
            <person name="Philips L.E."/>
            <person name="Voyich J.M."/>
            <person name="DeLeo F.R."/>
            <person name="Martin J.M."/>
            <person name="Somerville G.A."/>
            <person name="Musser J.M."/>
        </authorList>
    </citation>
    <scope>NUCLEOTIDE SEQUENCE [LARGE SCALE GENOMIC DNA]</scope>
    <source>
        <strain>ATCC BAA-946 / MGAS10394</strain>
    </source>
</reference>
<comment type="catalytic activity">
    <reaction>
        <text>alpha-D-glucose 1-phosphate + UTP + H(+) = UDP-alpha-D-glucose + diphosphate</text>
        <dbReference type="Rhea" id="RHEA:19889"/>
        <dbReference type="ChEBI" id="CHEBI:15378"/>
        <dbReference type="ChEBI" id="CHEBI:33019"/>
        <dbReference type="ChEBI" id="CHEBI:46398"/>
        <dbReference type="ChEBI" id="CHEBI:58601"/>
        <dbReference type="ChEBI" id="CHEBI:58885"/>
        <dbReference type="EC" id="2.7.7.9"/>
    </reaction>
</comment>
<comment type="pathway">
    <text>Carbohydrate metabolism; nucleotide-sugar metabolism.</text>
</comment>
<comment type="similarity">
    <text evidence="1">Belongs to the UDPGP type 2 family.</text>
</comment>
<dbReference type="EC" id="2.7.7.9"/>
<dbReference type="EMBL" id="CP000003">
    <property type="protein sequence ID" value="AAT88006.1"/>
    <property type="molecule type" value="Genomic_DNA"/>
</dbReference>
<dbReference type="SMR" id="Q5X9A7"/>
<dbReference type="KEGG" id="spa:M6_Spy1871"/>
<dbReference type="HOGENOM" id="CLU_029499_1_2_9"/>
<dbReference type="UniPathway" id="UPA00215"/>
<dbReference type="Proteomes" id="UP000001167">
    <property type="component" value="Chromosome"/>
</dbReference>
<dbReference type="GO" id="GO:0003983">
    <property type="term" value="F:UTP:glucose-1-phosphate uridylyltransferase activity"/>
    <property type="evidence" value="ECO:0007669"/>
    <property type="project" value="UniProtKB-EC"/>
</dbReference>
<dbReference type="GO" id="GO:0009058">
    <property type="term" value="P:biosynthetic process"/>
    <property type="evidence" value="ECO:0007669"/>
    <property type="project" value="InterPro"/>
</dbReference>
<dbReference type="GO" id="GO:0006011">
    <property type="term" value="P:UDP-alpha-D-glucose metabolic process"/>
    <property type="evidence" value="ECO:0007669"/>
    <property type="project" value="InterPro"/>
</dbReference>
<dbReference type="CDD" id="cd02541">
    <property type="entry name" value="UGPase_prokaryotic"/>
    <property type="match status" value="1"/>
</dbReference>
<dbReference type="Gene3D" id="3.90.550.10">
    <property type="entry name" value="Spore Coat Polysaccharide Biosynthesis Protein SpsA, Chain A"/>
    <property type="match status" value="1"/>
</dbReference>
<dbReference type="InterPro" id="IPR005771">
    <property type="entry name" value="GalU_uridylyltTrfase_bac/arc"/>
</dbReference>
<dbReference type="InterPro" id="IPR005835">
    <property type="entry name" value="NTP_transferase_dom"/>
</dbReference>
<dbReference type="InterPro" id="IPR029044">
    <property type="entry name" value="Nucleotide-diphossugar_trans"/>
</dbReference>
<dbReference type="NCBIfam" id="TIGR01099">
    <property type="entry name" value="galU"/>
    <property type="match status" value="1"/>
</dbReference>
<dbReference type="PANTHER" id="PTHR43197">
    <property type="entry name" value="UTP--GLUCOSE-1-PHOSPHATE URIDYLYLTRANSFERASE"/>
    <property type="match status" value="1"/>
</dbReference>
<dbReference type="PANTHER" id="PTHR43197:SF1">
    <property type="entry name" value="UTP--GLUCOSE-1-PHOSPHATE URIDYLYLTRANSFERASE"/>
    <property type="match status" value="1"/>
</dbReference>
<dbReference type="Pfam" id="PF00483">
    <property type="entry name" value="NTP_transferase"/>
    <property type="match status" value="1"/>
</dbReference>
<dbReference type="SUPFAM" id="SSF53448">
    <property type="entry name" value="Nucleotide-diphospho-sugar transferases"/>
    <property type="match status" value="1"/>
</dbReference>
<sequence>MTKVRKAIIPAAGLGTRFLPATKALAKEMLPIVDKPTIQFIVEEALKSGIEEILVVTGKAKRSIEDHFDSNFELEYNLQAKGKNELLKLVDETTAINLHFIRQSHPRGLGDAVLQAKAFVGNEPFVVMLGDDLMDITNASAKPLTKQLMEDYDKTHASTIAVMKVPHEDVSSYGVIAPQGKAVKGLYSVDTFVEKPQPEDAPSDLAIIGRYLLTPEIFDILERQVPGAGNEVQLTDAIDTLNKTQRVFAREFKGNRYDVGDKFGFMKTSIDYALEHPQVKEDLKNYIIKLGKALEKSKVPTHSK</sequence>
<proteinExistence type="inferred from homology"/>
<gene>
    <name type="primary">hasC2</name>
    <name type="synonym">hasC.2</name>
    <name type="ordered locus">M6_Spy1871</name>
</gene>